<evidence type="ECO:0000255" key="1">
    <source>
        <dbReference type="HAMAP-Rule" id="MF_00441"/>
    </source>
</evidence>
<accession>A5GIE8</accession>
<feature type="propeptide" id="PRO_0000316083" evidence="1">
    <location>
        <begin position="1"/>
        <end position="10"/>
    </location>
</feature>
<feature type="chain" id="PRO_1000025984" description="Photosystem II reaction center protein K" evidence="1">
    <location>
        <begin position="11"/>
        <end position="47"/>
    </location>
</feature>
<feature type="transmembrane region" description="Helical" evidence="1">
    <location>
        <begin position="19"/>
        <end position="39"/>
    </location>
</feature>
<comment type="function">
    <text evidence="1">One of the components of the core complex of photosystem II (PSII). PSII is a light-driven water:plastoquinone oxidoreductase that uses light energy to abstract electrons from H(2)O, generating O(2) and a proton gradient subsequently used for ATP formation. It consists of a core antenna complex that captures photons, and an electron transfer chain that converts photonic excitation into a charge separation.</text>
</comment>
<comment type="subunit">
    <text evidence="1">PSII is composed of 1 copy each of membrane proteins PsbA, PsbB, PsbC, PsbD, PsbE, PsbF, PsbH, PsbI, PsbJ, PsbK, PsbL, PsbM, PsbT, PsbX, PsbY, PsbZ, Psb30/Ycf12, peripheral proteins PsbO, CyanoQ (PsbQ), PsbU, PsbV and a large number of cofactors. It forms dimeric complexes.</text>
</comment>
<comment type="subcellular location">
    <subcellularLocation>
        <location evidence="1">Cellular thylakoid membrane</location>
        <topology evidence="1">Single-pass membrane protein</topology>
    </subcellularLocation>
</comment>
<comment type="similarity">
    <text evidence="1">Belongs to the PsbK family.</text>
</comment>
<name>PSBK_SYNPW</name>
<protein>
    <recommendedName>
        <fullName evidence="1">Photosystem II reaction center protein K</fullName>
        <shortName evidence="1">PSII-K</shortName>
    </recommendedName>
</protein>
<gene>
    <name evidence="1" type="primary">psbK</name>
    <name type="ordered locus">SynWH7803_0287</name>
</gene>
<proteinExistence type="inferred from homology"/>
<reference key="1">
    <citation type="submission" date="2006-05" db="EMBL/GenBank/DDBJ databases">
        <authorList>
            <consortium name="Genoscope"/>
        </authorList>
    </citation>
    <scope>NUCLEOTIDE SEQUENCE [LARGE SCALE GENOMIC DNA]</scope>
    <source>
        <strain>WH7803</strain>
    </source>
</reference>
<dbReference type="EMBL" id="CT971583">
    <property type="protein sequence ID" value="CAK22713.1"/>
    <property type="molecule type" value="Genomic_DNA"/>
</dbReference>
<dbReference type="SMR" id="A5GIE8"/>
<dbReference type="STRING" id="32051.SynWH7803_0287"/>
<dbReference type="KEGG" id="syx:SynWH7803_0287"/>
<dbReference type="eggNOG" id="ENOG5032YQR">
    <property type="taxonomic scope" value="Bacteria"/>
</dbReference>
<dbReference type="HOGENOM" id="CLU_174355_0_0_3"/>
<dbReference type="Proteomes" id="UP000001566">
    <property type="component" value="Chromosome"/>
</dbReference>
<dbReference type="GO" id="GO:0009539">
    <property type="term" value="C:photosystem II reaction center"/>
    <property type="evidence" value="ECO:0007669"/>
    <property type="project" value="InterPro"/>
</dbReference>
<dbReference type="GO" id="GO:0031676">
    <property type="term" value="C:plasma membrane-derived thylakoid membrane"/>
    <property type="evidence" value="ECO:0007669"/>
    <property type="project" value="UniProtKB-SubCell"/>
</dbReference>
<dbReference type="GO" id="GO:0015979">
    <property type="term" value="P:photosynthesis"/>
    <property type="evidence" value="ECO:0007669"/>
    <property type="project" value="UniProtKB-UniRule"/>
</dbReference>
<dbReference type="HAMAP" id="MF_00441">
    <property type="entry name" value="PSII_PsbK"/>
    <property type="match status" value="1"/>
</dbReference>
<dbReference type="InterPro" id="IPR003687">
    <property type="entry name" value="PSII_PsbK"/>
</dbReference>
<dbReference type="InterPro" id="IPR037270">
    <property type="entry name" value="PSII_PsbK_sf"/>
</dbReference>
<dbReference type="NCBIfam" id="NF002715">
    <property type="entry name" value="PRK02553.1"/>
    <property type="match status" value="1"/>
</dbReference>
<dbReference type="PANTHER" id="PTHR35325">
    <property type="match status" value="1"/>
</dbReference>
<dbReference type="PANTHER" id="PTHR35325:SF1">
    <property type="entry name" value="PHOTOSYSTEM II REACTION CENTER PROTEIN K"/>
    <property type="match status" value="1"/>
</dbReference>
<dbReference type="Pfam" id="PF02533">
    <property type="entry name" value="PsbK"/>
    <property type="match status" value="1"/>
</dbReference>
<dbReference type="SUPFAM" id="SSF161037">
    <property type="entry name" value="Photosystem II reaction center protein K, PsbK"/>
    <property type="match status" value="1"/>
</dbReference>
<organism>
    <name type="scientific">Synechococcus sp. (strain WH7803)</name>
    <dbReference type="NCBI Taxonomy" id="32051"/>
    <lineage>
        <taxon>Bacteria</taxon>
        <taxon>Bacillati</taxon>
        <taxon>Cyanobacteriota</taxon>
        <taxon>Cyanophyceae</taxon>
        <taxon>Synechococcales</taxon>
        <taxon>Synechococcaceae</taxon>
        <taxon>Synechococcus</taxon>
    </lineage>
</organism>
<keyword id="KW-0472">Membrane</keyword>
<keyword id="KW-0602">Photosynthesis</keyword>
<keyword id="KW-0604">Photosystem II</keyword>
<keyword id="KW-0674">Reaction center</keyword>
<keyword id="KW-1185">Reference proteome</keyword>
<keyword id="KW-0793">Thylakoid</keyword>
<keyword id="KW-0812">Transmembrane</keyword>
<keyword id="KW-1133">Transmembrane helix</keyword>
<sequence length="47" mass="5224">MAAFSLDLLAQLPEAYQAFGPLIDILPIIPVFFLLLAFVWQASVGFR</sequence>